<sequence>MEANDQTQNIPAISFRSVRKSYKQDGQTYDVLQDVTGDIQQGAIVAVLGPSGSGKSTLLSMCNLMRTPDSGEVNIYGKEVREWNVNELRRTAALAFQSAPVLDGTVRDNLSLVQRLHQSQLYSPEKLASLAGLPPELLDRSARDLSGGQRQRLSLARTLSNPSSILLLDEITSALDPVSALEIEELIKRQHQEKKWTVMWVTHNMEQAKRIADTIWFMADGRLLEIAETDTFFSAPQHEAAKEFLKGGTR</sequence>
<evidence type="ECO:0000255" key="1">
    <source>
        <dbReference type="PROSITE-ProRule" id="PRU00434"/>
    </source>
</evidence>
<evidence type="ECO:0000305" key="2"/>
<comment type="similarity">
    <text evidence="2">Belongs to the ABC transporter superfamily.</text>
</comment>
<proteinExistence type="inferred from homology"/>
<feature type="chain" id="PRO_0000360843" description="Putative ABC transporter ATP-binding protein YjkB">
    <location>
        <begin position="1"/>
        <end position="250"/>
    </location>
</feature>
<feature type="domain" description="ABC transporter" evidence="1">
    <location>
        <begin position="13"/>
        <end position="245"/>
    </location>
</feature>
<feature type="binding site" evidence="1">
    <location>
        <begin position="49"/>
        <end position="56"/>
    </location>
    <ligand>
        <name>ATP</name>
        <dbReference type="ChEBI" id="CHEBI:30616"/>
    </ligand>
</feature>
<organism>
    <name type="scientific">Bacillus subtilis (strain 168)</name>
    <dbReference type="NCBI Taxonomy" id="224308"/>
    <lineage>
        <taxon>Bacteria</taxon>
        <taxon>Bacillati</taxon>
        <taxon>Bacillota</taxon>
        <taxon>Bacilli</taxon>
        <taxon>Bacillales</taxon>
        <taxon>Bacillaceae</taxon>
        <taxon>Bacillus</taxon>
    </lineage>
</organism>
<reference key="1">
    <citation type="journal article" date="1998" name="Microbiology">
        <title>A 35.7 kb DNA fragment from the Bacillus subtilis chromosome containing a putative 12.3 kb operon involved in hexuronate catabolism and a perfectly symmetrical hypothetical catabolite-responsive element.</title>
        <authorList>
            <person name="Rivolta C."/>
            <person name="Soldo B."/>
            <person name="Lazarevic V."/>
            <person name="Joris B."/>
            <person name="Mauel C."/>
            <person name="Karamata D."/>
        </authorList>
    </citation>
    <scope>NUCLEOTIDE SEQUENCE [GENOMIC DNA]</scope>
    <source>
        <strain>168</strain>
    </source>
</reference>
<reference key="2">
    <citation type="journal article" date="1997" name="Nature">
        <title>The complete genome sequence of the Gram-positive bacterium Bacillus subtilis.</title>
        <authorList>
            <person name="Kunst F."/>
            <person name="Ogasawara N."/>
            <person name="Moszer I."/>
            <person name="Albertini A.M."/>
            <person name="Alloni G."/>
            <person name="Azevedo V."/>
            <person name="Bertero M.G."/>
            <person name="Bessieres P."/>
            <person name="Bolotin A."/>
            <person name="Borchert S."/>
            <person name="Borriss R."/>
            <person name="Boursier L."/>
            <person name="Brans A."/>
            <person name="Braun M."/>
            <person name="Brignell S.C."/>
            <person name="Bron S."/>
            <person name="Brouillet S."/>
            <person name="Bruschi C.V."/>
            <person name="Caldwell B."/>
            <person name="Capuano V."/>
            <person name="Carter N.M."/>
            <person name="Choi S.-K."/>
            <person name="Codani J.-J."/>
            <person name="Connerton I.F."/>
            <person name="Cummings N.J."/>
            <person name="Daniel R.A."/>
            <person name="Denizot F."/>
            <person name="Devine K.M."/>
            <person name="Duesterhoeft A."/>
            <person name="Ehrlich S.D."/>
            <person name="Emmerson P.T."/>
            <person name="Entian K.-D."/>
            <person name="Errington J."/>
            <person name="Fabret C."/>
            <person name="Ferrari E."/>
            <person name="Foulger D."/>
            <person name="Fritz C."/>
            <person name="Fujita M."/>
            <person name="Fujita Y."/>
            <person name="Fuma S."/>
            <person name="Galizzi A."/>
            <person name="Galleron N."/>
            <person name="Ghim S.-Y."/>
            <person name="Glaser P."/>
            <person name="Goffeau A."/>
            <person name="Golightly E.J."/>
            <person name="Grandi G."/>
            <person name="Guiseppi G."/>
            <person name="Guy B.J."/>
            <person name="Haga K."/>
            <person name="Haiech J."/>
            <person name="Harwood C.R."/>
            <person name="Henaut A."/>
            <person name="Hilbert H."/>
            <person name="Holsappel S."/>
            <person name="Hosono S."/>
            <person name="Hullo M.-F."/>
            <person name="Itaya M."/>
            <person name="Jones L.-M."/>
            <person name="Joris B."/>
            <person name="Karamata D."/>
            <person name="Kasahara Y."/>
            <person name="Klaerr-Blanchard M."/>
            <person name="Klein C."/>
            <person name="Kobayashi Y."/>
            <person name="Koetter P."/>
            <person name="Koningstein G."/>
            <person name="Krogh S."/>
            <person name="Kumano M."/>
            <person name="Kurita K."/>
            <person name="Lapidus A."/>
            <person name="Lardinois S."/>
            <person name="Lauber J."/>
            <person name="Lazarevic V."/>
            <person name="Lee S.-M."/>
            <person name="Levine A."/>
            <person name="Liu H."/>
            <person name="Masuda S."/>
            <person name="Mauel C."/>
            <person name="Medigue C."/>
            <person name="Medina N."/>
            <person name="Mellado R.P."/>
            <person name="Mizuno M."/>
            <person name="Moestl D."/>
            <person name="Nakai S."/>
            <person name="Noback M."/>
            <person name="Noone D."/>
            <person name="O'Reilly M."/>
            <person name="Ogawa K."/>
            <person name="Ogiwara A."/>
            <person name="Oudega B."/>
            <person name="Park S.-H."/>
            <person name="Parro V."/>
            <person name="Pohl T.M."/>
            <person name="Portetelle D."/>
            <person name="Porwollik S."/>
            <person name="Prescott A.M."/>
            <person name="Presecan E."/>
            <person name="Pujic P."/>
            <person name="Purnelle B."/>
            <person name="Rapoport G."/>
            <person name="Rey M."/>
            <person name="Reynolds S."/>
            <person name="Rieger M."/>
            <person name="Rivolta C."/>
            <person name="Rocha E."/>
            <person name="Roche B."/>
            <person name="Rose M."/>
            <person name="Sadaie Y."/>
            <person name="Sato T."/>
            <person name="Scanlan E."/>
            <person name="Schleich S."/>
            <person name="Schroeter R."/>
            <person name="Scoffone F."/>
            <person name="Sekiguchi J."/>
            <person name="Sekowska A."/>
            <person name="Seror S.J."/>
            <person name="Serror P."/>
            <person name="Shin B.-S."/>
            <person name="Soldo B."/>
            <person name="Sorokin A."/>
            <person name="Tacconi E."/>
            <person name="Takagi T."/>
            <person name="Takahashi H."/>
            <person name="Takemaru K."/>
            <person name="Takeuchi M."/>
            <person name="Tamakoshi A."/>
            <person name="Tanaka T."/>
            <person name="Terpstra P."/>
            <person name="Tognoni A."/>
            <person name="Tosato V."/>
            <person name="Uchiyama S."/>
            <person name="Vandenbol M."/>
            <person name="Vannier F."/>
            <person name="Vassarotti A."/>
            <person name="Viari A."/>
            <person name="Wambutt R."/>
            <person name="Wedler E."/>
            <person name="Wedler H."/>
            <person name="Weitzenegger T."/>
            <person name="Winters P."/>
            <person name="Wipat A."/>
            <person name="Yamamoto H."/>
            <person name="Yamane K."/>
            <person name="Yasumoto K."/>
            <person name="Yata K."/>
            <person name="Yoshida K."/>
            <person name="Yoshikawa H.-F."/>
            <person name="Zumstein E."/>
            <person name="Yoshikawa H."/>
            <person name="Danchin A."/>
        </authorList>
    </citation>
    <scope>NUCLEOTIDE SEQUENCE [LARGE SCALE GENOMIC DNA]</scope>
    <source>
        <strain>168</strain>
    </source>
</reference>
<protein>
    <recommendedName>
        <fullName>Putative ABC transporter ATP-binding protein YjkB</fullName>
    </recommendedName>
</protein>
<keyword id="KW-0067">ATP-binding</keyword>
<keyword id="KW-0547">Nucleotide-binding</keyword>
<keyword id="KW-1185">Reference proteome</keyword>
<keyword id="KW-0813">Transport</keyword>
<accession>O34756</accession>
<accession>Q796N4</accession>
<name>YJKB_BACSU</name>
<gene>
    <name type="primary">yjkB</name>
    <name type="ordered locus">BSU12250</name>
</gene>
<dbReference type="EMBL" id="AF015825">
    <property type="protein sequence ID" value="AAC46321.1"/>
    <property type="molecule type" value="Genomic_DNA"/>
</dbReference>
<dbReference type="EMBL" id="AL009126">
    <property type="protein sequence ID" value="CAB13082.1"/>
    <property type="molecule type" value="Genomic_DNA"/>
</dbReference>
<dbReference type="PIR" id="F69851">
    <property type="entry name" value="F69851"/>
</dbReference>
<dbReference type="RefSeq" id="NP_389107.1">
    <property type="nucleotide sequence ID" value="NC_000964.3"/>
</dbReference>
<dbReference type="RefSeq" id="WP_003232774.1">
    <property type="nucleotide sequence ID" value="NZ_OZ025638.1"/>
</dbReference>
<dbReference type="SMR" id="O34756"/>
<dbReference type="FunCoup" id="O34756">
    <property type="interactions" value="120"/>
</dbReference>
<dbReference type="STRING" id="224308.BSU12250"/>
<dbReference type="PaxDb" id="224308-BSU12250"/>
<dbReference type="EnsemblBacteria" id="CAB13082">
    <property type="protein sequence ID" value="CAB13082"/>
    <property type="gene ID" value="BSU_12250"/>
</dbReference>
<dbReference type="GeneID" id="939401"/>
<dbReference type="KEGG" id="bsu:BSU12250"/>
<dbReference type="PATRIC" id="fig|224308.179.peg.1324"/>
<dbReference type="eggNOG" id="COG1117">
    <property type="taxonomic scope" value="Bacteria"/>
</dbReference>
<dbReference type="InParanoid" id="O34756"/>
<dbReference type="OrthoDB" id="9785080at2"/>
<dbReference type="PhylomeDB" id="O34756"/>
<dbReference type="BioCyc" id="BSUB:BSU12250-MONOMER"/>
<dbReference type="Proteomes" id="UP000001570">
    <property type="component" value="Chromosome"/>
</dbReference>
<dbReference type="GO" id="GO:0016020">
    <property type="term" value="C:membrane"/>
    <property type="evidence" value="ECO:0007669"/>
    <property type="project" value="InterPro"/>
</dbReference>
<dbReference type="GO" id="GO:0005524">
    <property type="term" value="F:ATP binding"/>
    <property type="evidence" value="ECO:0007669"/>
    <property type="project" value="UniProtKB-KW"/>
</dbReference>
<dbReference type="GO" id="GO:0016887">
    <property type="term" value="F:ATP hydrolysis activity"/>
    <property type="evidence" value="ECO:0007669"/>
    <property type="project" value="InterPro"/>
</dbReference>
<dbReference type="GO" id="GO:0005315">
    <property type="term" value="F:phosphate transmembrane transporter activity"/>
    <property type="evidence" value="ECO:0007669"/>
    <property type="project" value="InterPro"/>
</dbReference>
<dbReference type="GO" id="GO:0035435">
    <property type="term" value="P:phosphate ion transmembrane transport"/>
    <property type="evidence" value="ECO:0007669"/>
    <property type="project" value="InterPro"/>
</dbReference>
<dbReference type="CDD" id="cd03260">
    <property type="entry name" value="ABC_PstB_phosphate_transporter"/>
    <property type="match status" value="1"/>
</dbReference>
<dbReference type="Gene3D" id="3.40.50.300">
    <property type="entry name" value="P-loop containing nucleotide triphosphate hydrolases"/>
    <property type="match status" value="1"/>
</dbReference>
<dbReference type="InterPro" id="IPR003593">
    <property type="entry name" value="AAA+_ATPase"/>
</dbReference>
<dbReference type="InterPro" id="IPR003439">
    <property type="entry name" value="ABC_transporter-like_ATP-bd"/>
</dbReference>
<dbReference type="InterPro" id="IPR017871">
    <property type="entry name" value="ABC_transporter-like_CS"/>
</dbReference>
<dbReference type="InterPro" id="IPR027417">
    <property type="entry name" value="P-loop_NTPase"/>
</dbReference>
<dbReference type="InterPro" id="IPR005670">
    <property type="entry name" value="PstB-like"/>
</dbReference>
<dbReference type="PANTHER" id="PTHR43423">
    <property type="entry name" value="ABC TRANSPORTER I FAMILY MEMBER 17"/>
    <property type="match status" value="1"/>
</dbReference>
<dbReference type="PANTHER" id="PTHR43423:SF1">
    <property type="entry name" value="ABC TRANSPORTER I FAMILY MEMBER 17"/>
    <property type="match status" value="1"/>
</dbReference>
<dbReference type="Pfam" id="PF00005">
    <property type="entry name" value="ABC_tran"/>
    <property type="match status" value="1"/>
</dbReference>
<dbReference type="SMART" id="SM00382">
    <property type="entry name" value="AAA"/>
    <property type="match status" value="1"/>
</dbReference>
<dbReference type="SUPFAM" id="SSF52540">
    <property type="entry name" value="P-loop containing nucleoside triphosphate hydrolases"/>
    <property type="match status" value="1"/>
</dbReference>
<dbReference type="PROSITE" id="PS00211">
    <property type="entry name" value="ABC_TRANSPORTER_1"/>
    <property type="match status" value="1"/>
</dbReference>
<dbReference type="PROSITE" id="PS50893">
    <property type="entry name" value="ABC_TRANSPORTER_2"/>
    <property type="match status" value="1"/>
</dbReference>